<evidence type="ECO:0000255" key="1">
    <source>
        <dbReference type="HAMAP-Rule" id="MF_01200"/>
    </source>
</evidence>
<name>PYRF_STRA3</name>
<feature type="chain" id="PRO_0000134584" description="Orotidine 5'-phosphate decarboxylase">
    <location>
        <begin position="1"/>
        <end position="233"/>
    </location>
</feature>
<feature type="active site" description="Proton donor" evidence="1">
    <location>
        <position position="63"/>
    </location>
</feature>
<feature type="binding site" evidence="1">
    <location>
        <position position="11"/>
    </location>
    <ligand>
        <name>substrate</name>
    </ligand>
</feature>
<feature type="binding site" evidence="1">
    <location>
        <position position="34"/>
    </location>
    <ligand>
        <name>substrate</name>
    </ligand>
</feature>
<feature type="binding site" evidence="1">
    <location>
        <begin position="61"/>
        <end position="70"/>
    </location>
    <ligand>
        <name>substrate</name>
    </ligand>
</feature>
<feature type="binding site" evidence="1">
    <location>
        <position position="117"/>
    </location>
    <ligand>
        <name>substrate</name>
    </ligand>
</feature>
<feature type="binding site" evidence="1">
    <location>
        <position position="179"/>
    </location>
    <ligand>
        <name>substrate</name>
    </ligand>
</feature>
<feature type="binding site" evidence="1">
    <location>
        <position position="189"/>
    </location>
    <ligand>
        <name>substrate</name>
    </ligand>
</feature>
<feature type="binding site" evidence="1">
    <location>
        <position position="209"/>
    </location>
    <ligand>
        <name>substrate</name>
    </ligand>
</feature>
<feature type="binding site" evidence="1">
    <location>
        <position position="210"/>
    </location>
    <ligand>
        <name>substrate</name>
    </ligand>
</feature>
<protein>
    <recommendedName>
        <fullName evidence="1">Orotidine 5'-phosphate decarboxylase</fullName>
        <ecNumber evidence="1">4.1.1.23</ecNumber>
    </recommendedName>
    <alternativeName>
        <fullName evidence="1">OMP decarboxylase</fullName>
        <shortName evidence="1">OMPDCase</shortName>
        <shortName evidence="1">OMPdecase</shortName>
    </alternativeName>
</protein>
<proteinExistence type="inferred from homology"/>
<accession>Q8E5F0</accession>
<organism>
    <name type="scientific">Streptococcus agalactiae serotype III (strain NEM316)</name>
    <dbReference type="NCBI Taxonomy" id="211110"/>
    <lineage>
        <taxon>Bacteria</taxon>
        <taxon>Bacillati</taxon>
        <taxon>Bacillota</taxon>
        <taxon>Bacilli</taxon>
        <taxon>Lactobacillales</taxon>
        <taxon>Streptococcaceae</taxon>
        <taxon>Streptococcus</taxon>
    </lineage>
</organism>
<keyword id="KW-0210">Decarboxylase</keyword>
<keyword id="KW-0456">Lyase</keyword>
<keyword id="KW-0665">Pyrimidine biosynthesis</keyword>
<reference key="1">
    <citation type="journal article" date="2002" name="Mol. Microbiol.">
        <title>Genome sequence of Streptococcus agalactiae, a pathogen causing invasive neonatal disease.</title>
        <authorList>
            <person name="Glaser P."/>
            <person name="Rusniok C."/>
            <person name="Buchrieser C."/>
            <person name="Chevalier F."/>
            <person name="Frangeul L."/>
            <person name="Msadek T."/>
            <person name="Zouine M."/>
            <person name="Couve E."/>
            <person name="Lalioui L."/>
            <person name="Poyart C."/>
            <person name="Trieu-Cuot P."/>
            <person name="Kunst F."/>
        </authorList>
    </citation>
    <scope>NUCLEOTIDE SEQUENCE [LARGE SCALE GENOMIC DNA]</scope>
    <source>
        <strain>NEM316</strain>
    </source>
</reference>
<gene>
    <name evidence="1" type="primary">pyrF</name>
    <name type="ordered locus">gbs1082</name>
</gene>
<comment type="function">
    <text evidence="1">Catalyzes the decarboxylation of orotidine 5'-monophosphate (OMP) to uridine 5'-monophosphate (UMP).</text>
</comment>
<comment type="catalytic activity">
    <reaction evidence="1">
        <text>orotidine 5'-phosphate + H(+) = UMP + CO2</text>
        <dbReference type="Rhea" id="RHEA:11596"/>
        <dbReference type="ChEBI" id="CHEBI:15378"/>
        <dbReference type="ChEBI" id="CHEBI:16526"/>
        <dbReference type="ChEBI" id="CHEBI:57538"/>
        <dbReference type="ChEBI" id="CHEBI:57865"/>
        <dbReference type="EC" id="4.1.1.23"/>
    </reaction>
</comment>
<comment type="pathway">
    <text evidence="1">Pyrimidine metabolism; UMP biosynthesis via de novo pathway; UMP from orotate: step 2/2.</text>
</comment>
<comment type="subunit">
    <text evidence="1">Homodimer.</text>
</comment>
<comment type="similarity">
    <text evidence="1">Belongs to the OMP decarboxylase family. Type 1 subfamily.</text>
</comment>
<dbReference type="EC" id="4.1.1.23" evidence="1"/>
<dbReference type="EMBL" id="AL766848">
    <property type="protein sequence ID" value="CAD46741.1"/>
    <property type="molecule type" value="Genomic_DNA"/>
</dbReference>
<dbReference type="RefSeq" id="WP_000890175.1">
    <property type="nucleotide sequence ID" value="NC_004368.1"/>
</dbReference>
<dbReference type="SMR" id="Q8E5F0"/>
<dbReference type="KEGG" id="san:pyrF"/>
<dbReference type="eggNOG" id="COG0284">
    <property type="taxonomic scope" value="Bacteria"/>
</dbReference>
<dbReference type="HOGENOM" id="CLU_067069_1_1_9"/>
<dbReference type="UniPathway" id="UPA00070">
    <property type="reaction ID" value="UER00120"/>
</dbReference>
<dbReference type="Proteomes" id="UP000000823">
    <property type="component" value="Chromosome"/>
</dbReference>
<dbReference type="GO" id="GO:0005829">
    <property type="term" value="C:cytosol"/>
    <property type="evidence" value="ECO:0007669"/>
    <property type="project" value="TreeGrafter"/>
</dbReference>
<dbReference type="GO" id="GO:0004590">
    <property type="term" value="F:orotidine-5'-phosphate decarboxylase activity"/>
    <property type="evidence" value="ECO:0007669"/>
    <property type="project" value="UniProtKB-UniRule"/>
</dbReference>
<dbReference type="GO" id="GO:0006207">
    <property type="term" value="P:'de novo' pyrimidine nucleobase biosynthetic process"/>
    <property type="evidence" value="ECO:0007669"/>
    <property type="project" value="InterPro"/>
</dbReference>
<dbReference type="GO" id="GO:0044205">
    <property type="term" value="P:'de novo' UMP biosynthetic process"/>
    <property type="evidence" value="ECO:0007669"/>
    <property type="project" value="UniProtKB-UniRule"/>
</dbReference>
<dbReference type="CDD" id="cd04725">
    <property type="entry name" value="OMP_decarboxylase_like"/>
    <property type="match status" value="1"/>
</dbReference>
<dbReference type="FunFam" id="3.20.20.70:FF:000015">
    <property type="entry name" value="Orotidine 5'-phosphate decarboxylase"/>
    <property type="match status" value="1"/>
</dbReference>
<dbReference type="Gene3D" id="3.20.20.70">
    <property type="entry name" value="Aldolase class I"/>
    <property type="match status" value="1"/>
</dbReference>
<dbReference type="HAMAP" id="MF_01200_B">
    <property type="entry name" value="OMPdecase_type1_B"/>
    <property type="match status" value="1"/>
</dbReference>
<dbReference type="InterPro" id="IPR013785">
    <property type="entry name" value="Aldolase_TIM"/>
</dbReference>
<dbReference type="InterPro" id="IPR014732">
    <property type="entry name" value="OMPdecase"/>
</dbReference>
<dbReference type="InterPro" id="IPR018089">
    <property type="entry name" value="OMPdecase_AS"/>
</dbReference>
<dbReference type="InterPro" id="IPR047596">
    <property type="entry name" value="OMPdecase_bac"/>
</dbReference>
<dbReference type="InterPro" id="IPR001754">
    <property type="entry name" value="OMPdeCOase_dom"/>
</dbReference>
<dbReference type="InterPro" id="IPR011060">
    <property type="entry name" value="RibuloseP-bd_barrel"/>
</dbReference>
<dbReference type="NCBIfam" id="NF001273">
    <property type="entry name" value="PRK00230.1"/>
    <property type="match status" value="1"/>
</dbReference>
<dbReference type="NCBIfam" id="TIGR01740">
    <property type="entry name" value="pyrF"/>
    <property type="match status" value="1"/>
</dbReference>
<dbReference type="PANTHER" id="PTHR32119">
    <property type="entry name" value="OROTIDINE 5'-PHOSPHATE DECARBOXYLASE"/>
    <property type="match status" value="1"/>
</dbReference>
<dbReference type="PANTHER" id="PTHR32119:SF2">
    <property type="entry name" value="OROTIDINE 5'-PHOSPHATE DECARBOXYLASE"/>
    <property type="match status" value="1"/>
</dbReference>
<dbReference type="Pfam" id="PF00215">
    <property type="entry name" value="OMPdecase"/>
    <property type="match status" value="1"/>
</dbReference>
<dbReference type="SMART" id="SM00934">
    <property type="entry name" value="OMPdecase"/>
    <property type="match status" value="1"/>
</dbReference>
<dbReference type="SUPFAM" id="SSF51366">
    <property type="entry name" value="Ribulose-phoshate binding barrel"/>
    <property type="match status" value="1"/>
</dbReference>
<dbReference type="PROSITE" id="PS00156">
    <property type="entry name" value="OMPDECASE"/>
    <property type="match status" value="1"/>
</dbReference>
<sequence length="233" mass="26034">MLEKCPIIALDFSDLASVTTFLEHFPKEELLFVKIGMELYYSEGPSIIRYIKSLGHRIFLDLKLHDIPNTVRSSMSVLAKLGIDMTNVHAAGGVEMMKAAREGLGEGPILLAVTQLTSTSQEQMQVDQHINLSVVDSVCHYAQKAQEAGLDGVVASAQEVKQIKKQTNEHFICLTPGIRPPQTNQLDDQKRTMTPEQARIVGADYIVVGRPITKAENPYQAYLEIKEEWNRIK</sequence>